<gene>
    <name evidence="1" type="primary">rplY</name>
    <name type="ordered locus">FTA_1000</name>
</gene>
<keyword id="KW-0687">Ribonucleoprotein</keyword>
<keyword id="KW-0689">Ribosomal protein</keyword>
<keyword id="KW-0694">RNA-binding</keyword>
<keyword id="KW-0699">rRNA-binding</keyword>
<evidence type="ECO:0000255" key="1">
    <source>
        <dbReference type="HAMAP-Rule" id="MF_01336"/>
    </source>
</evidence>
<evidence type="ECO:0000305" key="2"/>
<name>RL25_FRATF</name>
<feature type="chain" id="PRO_1000052953" description="Large ribosomal subunit protein bL25">
    <location>
        <begin position="1"/>
        <end position="96"/>
    </location>
</feature>
<sequence>MANFVLKAEKREDLGTGASRRLRRAGKIPAVIYGGEKEAVSVLLDHDKVLHSTEDKEFFSSEITLDIDGKQEKVIIKALQRHPYKVKLIHADFMRV</sequence>
<organism>
    <name type="scientific">Francisella tularensis subsp. holarctica (strain FTNF002-00 / FTA)</name>
    <dbReference type="NCBI Taxonomy" id="458234"/>
    <lineage>
        <taxon>Bacteria</taxon>
        <taxon>Pseudomonadati</taxon>
        <taxon>Pseudomonadota</taxon>
        <taxon>Gammaproteobacteria</taxon>
        <taxon>Thiotrichales</taxon>
        <taxon>Francisellaceae</taxon>
        <taxon>Francisella</taxon>
    </lineage>
</organism>
<accession>A7NBX3</accession>
<comment type="function">
    <text evidence="1">This is one of the proteins that binds to the 5S RNA in the ribosome where it forms part of the central protuberance.</text>
</comment>
<comment type="subunit">
    <text evidence="1">Part of the 50S ribosomal subunit; part of the 5S rRNA/L5/L18/L25 subcomplex. Contacts the 5S rRNA. Binds to the 5S rRNA independently of L5 and L18.</text>
</comment>
<comment type="similarity">
    <text evidence="1">Belongs to the bacterial ribosomal protein bL25 family.</text>
</comment>
<dbReference type="EMBL" id="CP000803">
    <property type="protein sequence ID" value="ABU61476.1"/>
    <property type="molecule type" value="Genomic_DNA"/>
</dbReference>
<dbReference type="RefSeq" id="WP_003015742.1">
    <property type="nucleotide sequence ID" value="NC_009749.1"/>
</dbReference>
<dbReference type="SMR" id="A7NBX3"/>
<dbReference type="KEGG" id="fta:FTA_1000"/>
<dbReference type="HOGENOM" id="CLU_137946_0_0_6"/>
<dbReference type="GO" id="GO:0022625">
    <property type="term" value="C:cytosolic large ribosomal subunit"/>
    <property type="evidence" value="ECO:0007669"/>
    <property type="project" value="TreeGrafter"/>
</dbReference>
<dbReference type="GO" id="GO:0008097">
    <property type="term" value="F:5S rRNA binding"/>
    <property type="evidence" value="ECO:0007669"/>
    <property type="project" value="InterPro"/>
</dbReference>
<dbReference type="GO" id="GO:0003735">
    <property type="term" value="F:structural constituent of ribosome"/>
    <property type="evidence" value="ECO:0007669"/>
    <property type="project" value="InterPro"/>
</dbReference>
<dbReference type="GO" id="GO:0006412">
    <property type="term" value="P:translation"/>
    <property type="evidence" value="ECO:0007669"/>
    <property type="project" value="UniProtKB-UniRule"/>
</dbReference>
<dbReference type="CDD" id="cd00495">
    <property type="entry name" value="Ribosomal_L25_TL5_CTC"/>
    <property type="match status" value="1"/>
</dbReference>
<dbReference type="FunFam" id="2.40.240.10:FF:000002">
    <property type="entry name" value="50S ribosomal protein L25"/>
    <property type="match status" value="1"/>
</dbReference>
<dbReference type="Gene3D" id="2.40.240.10">
    <property type="entry name" value="Ribosomal Protein L25, Chain P"/>
    <property type="match status" value="1"/>
</dbReference>
<dbReference type="HAMAP" id="MF_01336">
    <property type="entry name" value="Ribosomal_bL25"/>
    <property type="match status" value="1"/>
</dbReference>
<dbReference type="InterPro" id="IPR020056">
    <property type="entry name" value="Rbsml_bL25/Gln-tRNA_synth_N"/>
</dbReference>
<dbReference type="InterPro" id="IPR011035">
    <property type="entry name" value="Ribosomal_bL25/Gln-tRNA_synth"/>
</dbReference>
<dbReference type="InterPro" id="IPR001021">
    <property type="entry name" value="Ribosomal_bL25_long"/>
</dbReference>
<dbReference type="InterPro" id="IPR020055">
    <property type="entry name" value="Ribosomal_bL25_short"/>
</dbReference>
<dbReference type="InterPro" id="IPR029751">
    <property type="entry name" value="Ribosomal_L25_dom"/>
</dbReference>
<dbReference type="InterPro" id="IPR020930">
    <property type="entry name" value="Ribosomal_uL5_bac-type"/>
</dbReference>
<dbReference type="NCBIfam" id="TIGR00731">
    <property type="entry name" value="bL25_bact_ctc"/>
    <property type="match status" value="1"/>
</dbReference>
<dbReference type="NCBIfam" id="NF004612">
    <property type="entry name" value="PRK05943.1"/>
    <property type="match status" value="1"/>
</dbReference>
<dbReference type="PANTHER" id="PTHR33284">
    <property type="entry name" value="RIBOSOMAL PROTEIN L25/GLN-TRNA SYNTHETASE, ANTI-CODON-BINDING DOMAIN-CONTAINING PROTEIN"/>
    <property type="match status" value="1"/>
</dbReference>
<dbReference type="PANTHER" id="PTHR33284:SF1">
    <property type="entry name" value="RIBOSOMAL PROTEIN L25_GLN-TRNA SYNTHETASE, ANTI-CODON-BINDING DOMAIN-CONTAINING PROTEIN"/>
    <property type="match status" value="1"/>
</dbReference>
<dbReference type="Pfam" id="PF01386">
    <property type="entry name" value="Ribosomal_L25p"/>
    <property type="match status" value="1"/>
</dbReference>
<dbReference type="SUPFAM" id="SSF50715">
    <property type="entry name" value="Ribosomal protein L25-like"/>
    <property type="match status" value="1"/>
</dbReference>
<protein>
    <recommendedName>
        <fullName evidence="1">Large ribosomal subunit protein bL25</fullName>
    </recommendedName>
    <alternativeName>
        <fullName evidence="2">50S ribosomal protein L25</fullName>
    </alternativeName>
</protein>
<reference key="1">
    <citation type="journal article" date="2009" name="PLoS ONE">
        <title>Complete genome sequence of Francisella tularensis subspecies holarctica FTNF002-00.</title>
        <authorList>
            <person name="Barabote R.D."/>
            <person name="Xie G."/>
            <person name="Brettin T.S."/>
            <person name="Hinrichs S.H."/>
            <person name="Fey P.D."/>
            <person name="Jay J.J."/>
            <person name="Engle J.L."/>
            <person name="Godbole S.D."/>
            <person name="Noronha J.M."/>
            <person name="Scheuermann R.H."/>
            <person name="Zhou L.W."/>
            <person name="Lion C."/>
            <person name="Dempsey M.P."/>
        </authorList>
    </citation>
    <scope>NUCLEOTIDE SEQUENCE [LARGE SCALE GENOMIC DNA]</scope>
    <source>
        <strain>FTNF002-00 / FTA</strain>
    </source>
</reference>
<proteinExistence type="inferred from homology"/>